<proteinExistence type="evidence at protein level"/>
<evidence type="ECO:0000255" key="1"/>
<evidence type="ECO:0000269" key="2">
    <source>
    </source>
</evidence>
<evidence type="ECO:0000303" key="3">
    <source>
    </source>
</evidence>
<evidence type="ECO:0000303" key="4">
    <source>
    </source>
</evidence>
<evidence type="ECO:0000305" key="5"/>
<evidence type="ECO:0000305" key="6">
    <source>
    </source>
</evidence>
<dbReference type="EMBL" id="JN646117">
    <property type="protein sequence ID" value="AFM55006.1"/>
    <property type="molecule type" value="mRNA"/>
</dbReference>
<dbReference type="SMR" id="I6R1R5"/>
<dbReference type="GO" id="GO:0005576">
    <property type="term" value="C:extracellular region"/>
    <property type="evidence" value="ECO:0007669"/>
    <property type="project" value="UniProtKB-SubCell"/>
</dbReference>
<dbReference type="GO" id="GO:0005246">
    <property type="term" value="F:calcium channel regulator activity"/>
    <property type="evidence" value="ECO:0007669"/>
    <property type="project" value="UniProtKB-KW"/>
</dbReference>
<dbReference type="GO" id="GO:0090729">
    <property type="term" value="F:toxin activity"/>
    <property type="evidence" value="ECO:0007669"/>
    <property type="project" value="UniProtKB-KW"/>
</dbReference>
<dbReference type="CDD" id="cd23590">
    <property type="entry name" value="TFP_LU_ECD_Bou"/>
    <property type="match status" value="1"/>
</dbReference>
<dbReference type="InterPro" id="IPR045860">
    <property type="entry name" value="Snake_toxin-like_sf"/>
</dbReference>
<dbReference type="SUPFAM" id="SSF57302">
    <property type="entry name" value="Snake toxin-like"/>
    <property type="match status" value="1"/>
</dbReference>
<sequence>MPSLCIIALFGTLTFYTLIPSIHTLKCVRCDGPMSNYDCKTTYPAAEECPSLSGGSSNYCSKKETFTSNGNLEQTRRYCNSVAAPSTACTDLKTGGKLCEYSCNTDGCNSVAGMEPTRAVYFIAILMLA</sequence>
<name>TX51A_SCOMU</name>
<organism>
    <name type="scientific">Scolopendra mutilans</name>
    <name type="common">Chinese red-headed centipede</name>
    <name type="synonym">Scolopendra subspinipes mutilans</name>
    <dbReference type="NCBI Taxonomy" id="2836329"/>
    <lineage>
        <taxon>Eukaryota</taxon>
        <taxon>Metazoa</taxon>
        <taxon>Ecdysozoa</taxon>
        <taxon>Arthropoda</taxon>
        <taxon>Myriapoda</taxon>
        <taxon>Chilopoda</taxon>
        <taxon>Pleurostigmophora</taxon>
        <taxon>Scolopendromorpha</taxon>
        <taxon>Scolopendridae</taxon>
        <taxon>Scolopendra</taxon>
    </lineage>
</organism>
<accession>I6R1R5</accession>
<keyword id="KW-0108">Calcium channel impairing toxin</keyword>
<keyword id="KW-0903">Direct protein sequencing</keyword>
<keyword id="KW-1015">Disulfide bond</keyword>
<keyword id="KW-0872">Ion channel impairing toxin</keyword>
<keyword id="KW-0528">Neurotoxin</keyword>
<keyword id="KW-0964">Secreted</keyword>
<keyword id="KW-0732">Signal</keyword>
<keyword id="KW-0800">Toxin</keyword>
<keyword id="KW-1218">Voltage-gated calcium channel impairing toxin</keyword>
<protein>
    <recommendedName>
        <fullName evidence="4">Omega-scoloptoxin(05)-Ssm1a</fullName>
        <shortName evidence="4">Omega-SLPTX(05)-Ssm1a</shortName>
    </recommendedName>
    <alternativeName>
        <fullName evidence="3">Omega-scoloptoxin-Ssm1a</fullName>
        <shortName evidence="3">Omega-SLPTX-Ssm1a</shortName>
    </alternativeName>
</protein>
<comment type="function">
    <text evidence="2">Toxin that increase voltage-gated calcium channel (Cav) currents in DRG neurons by 70% and 120%, when 1 uM and 10 uM are tested, respectively.</text>
</comment>
<comment type="subcellular location">
    <subcellularLocation>
        <location evidence="2">Secreted</location>
    </subcellularLocation>
</comment>
<comment type="tissue specificity">
    <text evidence="6">Expressed by the venom gland.</text>
</comment>
<comment type="PTM">
    <text evidence="5">Contains 3 disulfide bonds.</text>
</comment>
<comment type="mass spectrometry"/>
<comment type="miscellaneous">
    <text evidence="6">Negative results: does not show insecticidal activity.</text>
</comment>
<comment type="miscellaneous">
    <text evidence="5">The scoloptoxin-05 family has remarkable similarities with the three-finger toxin family commonly found in snakes.</text>
</comment>
<comment type="similarity">
    <text evidence="5">Belongs to the scoloptoxin-05 family.</text>
</comment>
<reference key="1">
    <citation type="journal article" date="2012" name="Mol. Cell. Proteomics">
        <title>Chemical punch packed in venoms makes centipedes excellent predators.</title>
        <authorList>
            <person name="Yang S."/>
            <person name="Liu Z."/>
            <person name="Xiao Y."/>
            <person name="Li Y."/>
            <person name="Rong M."/>
            <person name="Liang S."/>
            <person name="Zhang Z."/>
            <person name="Yu H."/>
            <person name="King G.F."/>
            <person name="Lai R."/>
        </authorList>
    </citation>
    <scope>NUCLEOTIDE SEQUENCE [MRNA]</scope>
    <scope>PROTEIN SEQUENCE OF 47-129</scope>
    <scope>FUNCTION</scope>
    <scope>BIOASSAY</scope>
    <scope>DISULFIDE BONDS</scope>
    <scope>MASS SPECTROMETRY</scope>
    <scope>SUBCELLULAR LOCATION</scope>
    <source>
        <tissue>Venom</tissue>
        <tissue>Venom gland</tissue>
    </source>
</reference>
<reference key="2">
    <citation type="journal article" date="2014" name="Mol. Biol. Evol.">
        <title>Clawing through evolution: toxin diversification and convergence in the ancient lineage Chilopoda (centipedes).</title>
        <authorList>
            <person name="Undheim E.A."/>
            <person name="Jones A."/>
            <person name="Clauser K.R."/>
            <person name="Holland J.W."/>
            <person name="Pineda S.S."/>
            <person name="King G.F."/>
            <person name="Fry B.G."/>
        </authorList>
    </citation>
    <scope>NOMENCLATURE</scope>
</reference>
<feature type="signal peptide" evidence="1">
    <location>
        <begin position="1"/>
        <end position="24"/>
    </location>
</feature>
<feature type="propeptide" id="PRO_0000425464" evidence="6">
    <location>
        <begin position="25"/>
        <end position="46"/>
    </location>
</feature>
<feature type="chain" id="PRO_0000425465" description="Omega-scoloptoxin(05)-Ssm1a" evidence="2">
    <location>
        <begin position="47"/>
        <end position="129"/>
    </location>
</feature>